<reference key="1">
    <citation type="submission" date="2005-08" db="EMBL/GenBank/DDBJ databases">
        <title>Complete sequence of chromosome 1 of Nitrosospira multiformis ATCC 25196.</title>
        <authorList>
            <person name="Copeland A."/>
            <person name="Lucas S."/>
            <person name="Lapidus A."/>
            <person name="Barry K."/>
            <person name="Detter J.C."/>
            <person name="Glavina T."/>
            <person name="Hammon N."/>
            <person name="Israni S."/>
            <person name="Pitluck S."/>
            <person name="Chain P."/>
            <person name="Malfatti S."/>
            <person name="Shin M."/>
            <person name="Vergez L."/>
            <person name="Schmutz J."/>
            <person name="Larimer F."/>
            <person name="Land M."/>
            <person name="Hauser L."/>
            <person name="Kyrpides N."/>
            <person name="Lykidis A."/>
            <person name="Richardson P."/>
        </authorList>
    </citation>
    <scope>NUCLEOTIDE SEQUENCE [LARGE SCALE GENOMIC DNA]</scope>
    <source>
        <strain>ATCC 25196 / NCIMB 11849 / C 71</strain>
    </source>
</reference>
<sequence length="88" mass="10120">MSEANLNRTLSGKVVSDKMNKTITVLVERKVKHPLYGKIMVRSKKYHVHDEANEFHTGDVVVIEECRPLSKTKAWRVVKLMQKAEQVS</sequence>
<proteinExistence type="inferred from homology"/>
<comment type="function">
    <text evidence="1">One of the primary rRNA binding proteins, it binds specifically to the 5'-end of 16S ribosomal RNA.</text>
</comment>
<comment type="subunit">
    <text evidence="1">Part of the 30S ribosomal subunit.</text>
</comment>
<comment type="similarity">
    <text evidence="1">Belongs to the universal ribosomal protein uS17 family.</text>
</comment>
<protein>
    <recommendedName>
        <fullName evidence="1">Small ribosomal subunit protein uS17</fullName>
    </recommendedName>
    <alternativeName>
        <fullName evidence="2">30S ribosomal protein S17</fullName>
    </alternativeName>
</protein>
<accession>Q2YAY8</accession>
<organism>
    <name type="scientific">Nitrosospira multiformis (strain ATCC 25196 / NCIMB 11849 / C 71)</name>
    <dbReference type="NCBI Taxonomy" id="323848"/>
    <lineage>
        <taxon>Bacteria</taxon>
        <taxon>Pseudomonadati</taxon>
        <taxon>Pseudomonadota</taxon>
        <taxon>Betaproteobacteria</taxon>
        <taxon>Nitrosomonadales</taxon>
        <taxon>Nitrosomonadaceae</taxon>
        <taxon>Nitrosospira</taxon>
    </lineage>
</organism>
<feature type="chain" id="PRO_0000233522" description="Small ribosomal subunit protein uS17">
    <location>
        <begin position="1"/>
        <end position="88"/>
    </location>
</feature>
<evidence type="ECO:0000255" key="1">
    <source>
        <dbReference type="HAMAP-Rule" id="MF_01345"/>
    </source>
</evidence>
<evidence type="ECO:0000305" key="2"/>
<gene>
    <name evidence="1" type="primary">rpsQ</name>
    <name type="ordered locus">Nmul_A0776</name>
</gene>
<name>RS17_NITMU</name>
<keyword id="KW-1185">Reference proteome</keyword>
<keyword id="KW-0687">Ribonucleoprotein</keyword>
<keyword id="KW-0689">Ribosomal protein</keyword>
<keyword id="KW-0694">RNA-binding</keyword>
<keyword id="KW-0699">rRNA-binding</keyword>
<dbReference type="EMBL" id="CP000103">
    <property type="protein sequence ID" value="ABB74083.1"/>
    <property type="molecule type" value="Genomic_DNA"/>
</dbReference>
<dbReference type="RefSeq" id="WP_011380132.1">
    <property type="nucleotide sequence ID" value="NC_007614.1"/>
</dbReference>
<dbReference type="SMR" id="Q2YAY8"/>
<dbReference type="STRING" id="323848.Nmul_A0776"/>
<dbReference type="KEGG" id="nmu:Nmul_A0776"/>
<dbReference type="eggNOG" id="COG0186">
    <property type="taxonomic scope" value="Bacteria"/>
</dbReference>
<dbReference type="HOGENOM" id="CLU_073626_1_1_4"/>
<dbReference type="OrthoDB" id="9811714at2"/>
<dbReference type="Proteomes" id="UP000002718">
    <property type="component" value="Chromosome"/>
</dbReference>
<dbReference type="GO" id="GO:0022627">
    <property type="term" value="C:cytosolic small ribosomal subunit"/>
    <property type="evidence" value="ECO:0007669"/>
    <property type="project" value="TreeGrafter"/>
</dbReference>
<dbReference type="GO" id="GO:0019843">
    <property type="term" value="F:rRNA binding"/>
    <property type="evidence" value="ECO:0007669"/>
    <property type="project" value="UniProtKB-UniRule"/>
</dbReference>
<dbReference type="GO" id="GO:0003735">
    <property type="term" value="F:structural constituent of ribosome"/>
    <property type="evidence" value="ECO:0007669"/>
    <property type="project" value="InterPro"/>
</dbReference>
<dbReference type="GO" id="GO:0006412">
    <property type="term" value="P:translation"/>
    <property type="evidence" value="ECO:0007669"/>
    <property type="project" value="UniProtKB-UniRule"/>
</dbReference>
<dbReference type="CDD" id="cd00364">
    <property type="entry name" value="Ribosomal_uS17"/>
    <property type="match status" value="1"/>
</dbReference>
<dbReference type="Gene3D" id="2.40.50.140">
    <property type="entry name" value="Nucleic acid-binding proteins"/>
    <property type="match status" value="1"/>
</dbReference>
<dbReference type="HAMAP" id="MF_01345_B">
    <property type="entry name" value="Ribosomal_uS17_B"/>
    <property type="match status" value="1"/>
</dbReference>
<dbReference type="InterPro" id="IPR012340">
    <property type="entry name" value="NA-bd_OB-fold"/>
</dbReference>
<dbReference type="InterPro" id="IPR000266">
    <property type="entry name" value="Ribosomal_uS17"/>
</dbReference>
<dbReference type="InterPro" id="IPR019984">
    <property type="entry name" value="Ribosomal_uS17_bact/chlr"/>
</dbReference>
<dbReference type="InterPro" id="IPR019979">
    <property type="entry name" value="Ribosomal_uS17_CS"/>
</dbReference>
<dbReference type="NCBIfam" id="NF004123">
    <property type="entry name" value="PRK05610.1"/>
    <property type="match status" value="1"/>
</dbReference>
<dbReference type="NCBIfam" id="TIGR03635">
    <property type="entry name" value="uS17_bact"/>
    <property type="match status" value="1"/>
</dbReference>
<dbReference type="PANTHER" id="PTHR10744">
    <property type="entry name" value="40S RIBOSOMAL PROTEIN S11 FAMILY MEMBER"/>
    <property type="match status" value="1"/>
</dbReference>
<dbReference type="PANTHER" id="PTHR10744:SF1">
    <property type="entry name" value="SMALL RIBOSOMAL SUBUNIT PROTEIN US17M"/>
    <property type="match status" value="1"/>
</dbReference>
<dbReference type="Pfam" id="PF00366">
    <property type="entry name" value="Ribosomal_S17"/>
    <property type="match status" value="1"/>
</dbReference>
<dbReference type="PRINTS" id="PR00973">
    <property type="entry name" value="RIBOSOMALS17"/>
</dbReference>
<dbReference type="SUPFAM" id="SSF50249">
    <property type="entry name" value="Nucleic acid-binding proteins"/>
    <property type="match status" value="1"/>
</dbReference>
<dbReference type="PROSITE" id="PS00056">
    <property type="entry name" value="RIBOSOMAL_S17"/>
    <property type="match status" value="1"/>
</dbReference>